<sequence length="34" mass="3685">CGPCFTTDHQMEQKCAECCGGIGKCYGPQCLCNR</sequence>
<comment type="function">
    <text evidence="3">Chloride channel ligand. Potently and reversibly inhibits CFTR chloride channels when the channels are in the interburst closed state. May also interact with chloride channels (probably ClC-3/CLCN3) and MMP2 at the surface of glioma cells. This complex may be then internalized via caveolae, thus inhibiting the chloride channels necessary for cell shrinkage and tumor propagation.</text>
</comment>
<comment type="subcellular location">
    <subcellularLocation>
        <location evidence="3">Secreted</location>
    </subcellularLocation>
</comment>
<comment type="tissue specificity">
    <text evidence="5">Expressed by the venom gland.</text>
</comment>
<comment type="mass spectrometry" mass="3674.6" method="MALDI" evidence="3"/>
<comment type="miscellaneous">
    <text>Negative results: does not inhibit ClC-1/CLCN1, ClC-2/CLCN2 or ClC-3/CLCN3 voltage-gated chloride channels, GABA(C)/GABRR receptors, Shaker Kv1.1/KCNA1 potassium channels, or the multidrug resistance proteins ABCC1 (MRP1), ABCC2 (MRP2) and ABCC3 (MRP3).</text>
</comment>
<comment type="similarity">
    <text evidence="2">Belongs to the short scorpion toxin superfamily. Chloride channel inhibitor family.</text>
</comment>
<organism>
    <name type="scientific">Leiurus hebraeus</name>
    <name type="common">Hebrew deathstalker scorpion</name>
    <name type="synonym">Leiurus quinquestriatus hebraeus</name>
    <dbReference type="NCBI Taxonomy" id="2899558"/>
    <lineage>
        <taxon>Eukaryota</taxon>
        <taxon>Metazoa</taxon>
        <taxon>Ecdysozoa</taxon>
        <taxon>Arthropoda</taxon>
        <taxon>Chelicerata</taxon>
        <taxon>Arachnida</taxon>
        <taxon>Scorpiones</taxon>
        <taxon>Buthida</taxon>
        <taxon>Buthoidea</taxon>
        <taxon>Buthidae</taxon>
        <taxon>Leiurus</taxon>
    </lineage>
</organism>
<reference key="1">
    <citation type="journal article" date="2007" name="J. Biol. Chem.">
        <title>State-dependent inhibition of cystic fibrosis transmembrane conductance regulator chloride channels by a novel peptide toxin.</title>
        <authorList>
            <person name="Fuller M.D."/>
            <person name="Thompson C.H."/>
            <person name="Zhang Z.-R."/>
            <person name="Freeman C.S."/>
            <person name="Schay E."/>
            <person name="Szakacs G."/>
            <person name="Bakos E."/>
            <person name="Sarkadi B."/>
            <person name="McMaster D."/>
            <person name="French R.J."/>
            <person name="Pohl J."/>
            <person name="Kubanek J."/>
            <person name="McCarty N.A."/>
        </authorList>
    </citation>
    <scope>PROTEIN SEQUENCE</scope>
    <scope>FUNCTION</scope>
    <scope>SUBCELLULAR LOCATION</scope>
    <scope>MASS SPECTROMETRY</scope>
    <scope>AMIDATION AT ARG-34</scope>
    <source>
        <tissue>Venom</tissue>
    </source>
</reference>
<protein>
    <recommendedName>
        <fullName evidence="4">Toxin GaTx1</fullName>
    </recommendedName>
</protein>
<keyword id="KW-0027">Amidation</keyword>
<keyword id="KW-1265">Chloride channel impairing toxin</keyword>
<keyword id="KW-0903">Direct protein sequencing</keyword>
<keyword id="KW-1015">Disulfide bond</keyword>
<keyword id="KW-0872">Ion channel impairing toxin</keyword>
<keyword id="KW-0960">Knottin</keyword>
<keyword id="KW-0964">Secreted</keyword>
<keyword id="KW-0800">Toxin</keyword>
<keyword id="KW-0870">Voltage-gated chloride channel impairing toxin</keyword>
<feature type="chain" id="PRO_0000312773" description="Toxin GaTx1" evidence="3">
    <location>
        <begin position="1"/>
        <end position="34"/>
    </location>
</feature>
<feature type="modified residue" description="Arginine amide" evidence="3">
    <location>
        <position position="34"/>
    </location>
</feature>
<feature type="disulfide bond" evidence="1 2">
    <location>
        <begin position="1"/>
        <end position="18"/>
    </location>
</feature>
<feature type="disulfide bond" evidence="1 2">
    <location>
        <begin position="4"/>
        <end position="25"/>
    </location>
</feature>
<feature type="disulfide bond" evidence="1 2">
    <location>
        <begin position="15"/>
        <end position="30"/>
    </location>
</feature>
<feature type="disulfide bond" evidence="1 2">
    <location>
        <begin position="19"/>
        <end position="32"/>
    </location>
</feature>
<name>CTXL1_LEIHE</name>
<accession>P85066</accession>
<dbReference type="SMR" id="P85066"/>
<dbReference type="TCDB" id="8.B.7.1.1">
    <property type="family name" value="the cl(-) channel peptide inhibitor (gatx1) family"/>
</dbReference>
<dbReference type="GO" id="GO:0005576">
    <property type="term" value="C:extracellular region"/>
    <property type="evidence" value="ECO:0007669"/>
    <property type="project" value="UniProtKB-SubCell"/>
</dbReference>
<dbReference type="GO" id="GO:0017081">
    <property type="term" value="F:chloride channel regulator activity"/>
    <property type="evidence" value="ECO:0007669"/>
    <property type="project" value="UniProtKB-KW"/>
</dbReference>
<dbReference type="GO" id="GO:0090729">
    <property type="term" value="F:toxin activity"/>
    <property type="evidence" value="ECO:0007669"/>
    <property type="project" value="UniProtKB-KW"/>
</dbReference>
<dbReference type="InterPro" id="IPR036574">
    <property type="entry name" value="Scorpion_toxin-like_sf"/>
</dbReference>
<dbReference type="InterPro" id="IPR007958">
    <property type="entry name" value="Scorpion_toxinS_Cl_inh"/>
</dbReference>
<dbReference type="Pfam" id="PF05294">
    <property type="entry name" value="Toxin_5"/>
    <property type="match status" value="1"/>
</dbReference>
<dbReference type="SUPFAM" id="SSF57095">
    <property type="entry name" value="Scorpion toxin-like"/>
    <property type="match status" value="1"/>
</dbReference>
<dbReference type="PROSITE" id="PS51200">
    <property type="entry name" value="SHORT_SCORPION_CHLORIDE"/>
    <property type="match status" value="1"/>
</dbReference>
<proteinExistence type="evidence at protein level"/>
<evidence type="ECO:0000250" key="1">
    <source>
        <dbReference type="UniProtKB" id="P15222"/>
    </source>
</evidence>
<evidence type="ECO:0000255" key="2">
    <source>
        <dbReference type="PROSITE-ProRule" id="PRU00545"/>
    </source>
</evidence>
<evidence type="ECO:0000269" key="3">
    <source>
    </source>
</evidence>
<evidence type="ECO:0000303" key="4">
    <source>
    </source>
</evidence>
<evidence type="ECO:0000305" key="5">
    <source>
    </source>
</evidence>